<gene>
    <name type="primary">ARL15</name>
</gene>
<keyword id="KW-0342">GTP-binding</keyword>
<keyword id="KW-0547">Nucleotide-binding</keyword>
<keyword id="KW-1185">Reference proteome</keyword>
<reference key="1">
    <citation type="submission" date="2004-11" db="EMBL/GenBank/DDBJ databases">
        <authorList>
            <consortium name="The German cDNA consortium"/>
        </authorList>
    </citation>
    <scope>NUCLEOTIDE SEQUENCE [LARGE SCALE MRNA]</scope>
    <source>
        <tissue>Kidney</tissue>
    </source>
</reference>
<name>ARL15_PONAB</name>
<dbReference type="EMBL" id="CR857123">
    <property type="protein sequence ID" value="CAH89427.1"/>
    <property type="molecule type" value="mRNA"/>
</dbReference>
<dbReference type="RefSeq" id="NP_001124605.1">
    <property type="nucleotide sequence ID" value="NM_001131133.1"/>
</dbReference>
<dbReference type="SMR" id="Q5RFN0"/>
<dbReference type="FunCoup" id="Q5RFN0">
    <property type="interactions" value="169"/>
</dbReference>
<dbReference type="STRING" id="9601.ENSPPYP00000017273"/>
<dbReference type="GeneID" id="100171442"/>
<dbReference type="KEGG" id="pon:100171442"/>
<dbReference type="CTD" id="54622"/>
<dbReference type="eggNOG" id="KOG0071">
    <property type="taxonomic scope" value="Eukaryota"/>
</dbReference>
<dbReference type="InParanoid" id="Q5RFN0"/>
<dbReference type="OrthoDB" id="414781at2759"/>
<dbReference type="Proteomes" id="UP000001595">
    <property type="component" value="Unplaced"/>
</dbReference>
<dbReference type="GO" id="GO:0005525">
    <property type="term" value="F:GTP binding"/>
    <property type="evidence" value="ECO:0007669"/>
    <property type="project" value="UniProtKB-KW"/>
</dbReference>
<dbReference type="GO" id="GO:0003924">
    <property type="term" value="F:GTPase activity"/>
    <property type="evidence" value="ECO:0007669"/>
    <property type="project" value="InterPro"/>
</dbReference>
<dbReference type="CDD" id="cd04162">
    <property type="entry name" value="Arl9_Arfrp2_like"/>
    <property type="match status" value="1"/>
</dbReference>
<dbReference type="FunFam" id="3.40.50.300:FF:000934">
    <property type="entry name" value="ADP-ribosylation factor-like 15 isoform X1"/>
    <property type="match status" value="1"/>
</dbReference>
<dbReference type="Gene3D" id="3.40.50.300">
    <property type="entry name" value="P-loop containing nucleotide triphosphate hydrolases"/>
    <property type="match status" value="1"/>
</dbReference>
<dbReference type="InterPro" id="IPR042292">
    <property type="entry name" value="ARL15"/>
</dbReference>
<dbReference type="InterPro" id="IPR027417">
    <property type="entry name" value="P-loop_NTPase"/>
</dbReference>
<dbReference type="InterPro" id="IPR006689">
    <property type="entry name" value="Small_GTPase_ARF/SAR"/>
</dbReference>
<dbReference type="PANTHER" id="PTHR46693">
    <property type="entry name" value="ADP-RIBOSYLATION FACTOR-LIKE PROTEIN 15"/>
    <property type="match status" value="1"/>
</dbReference>
<dbReference type="PANTHER" id="PTHR46693:SF1">
    <property type="entry name" value="ADP-RIBOSYLATION FACTOR-LIKE PROTEIN 15"/>
    <property type="match status" value="1"/>
</dbReference>
<dbReference type="Pfam" id="PF00025">
    <property type="entry name" value="Arf"/>
    <property type="match status" value="1"/>
</dbReference>
<dbReference type="PRINTS" id="PR00328">
    <property type="entry name" value="SAR1GTPBP"/>
</dbReference>
<dbReference type="SMART" id="SM00177">
    <property type="entry name" value="ARF"/>
    <property type="match status" value="1"/>
</dbReference>
<dbReference type="SMART" id="SM00178">
    <property type="entry name" value="SAR"/>
    <property type="match status" value="1"/>
</dbReference>
<dbReference type="SUPFAM" id="SSF52540">
    <property type="entry name" value="P-loop containing nucleoside triphosphate hydrolases"/>
    <property type="match status" value="1"/>
</dbReference>
<dbReference type="PROSITE" id="PS51417">
    <property type="entry name" value="ARF"/>
    <property type="match status" value="1"/>
</dbReference>
<organism>
    <name type="scientific">Pongo abelii</name>
    <name type="common">Sumatran orangutan</name>
    <name type="synonym">Pongo pygmaeus abelii</name>
    <dbReference type="NCBI Taxonomy" id="9601"/>
    <lineage>
        <taxon>Eukaryota</taxon>
        <taxon>Metazoa</taxon>
        <taxon>Chordata</taxon>
        <taxon>Craniata</taxon>
        <taxon>Vertebrata</taxon>
        <taxon>Euteleostomi</taxon>
        <taxon>Mammalia</taxon>
        <taxon>Eutheria</taxon>
        <taxon>Euarchontoglires</taxon>
        <taxon>Primates</taxon>
        <taxon>Haplorrhini</taxon>
        <taxon>Catarrhini</taxon>
        <taxon>Hominidae</taxon>
        <taxon>Pongo</taxon>
    </lineage>
</organism>
<comment type="similarity">
    <text evidence="2">Belongs to the small GTPase superfamily. Arf family.</text>
</comment>
<proteinExistence type="evidence at transcript level"/>
<evidence type="ECO:0000250" key="1"/>
<evidence type="ECO:0000305" key="2"/>
<accession>Q5RFN0</accession>
<sequence length="204" mass="22908">MSDLRMTEAFLYMDYLCFRALCCKGPPPARPEYDLVCIGLTGSGKTSLLSKLCSESPDNVVSTTGFSIKAVPFQNAILNVKELGGADNIRKYWSRYYQGSQGVIFVLDSASSEDDLEAARNELHSALQHPQLCTLPFLILANHQDKPAARSVQEIKKYFELEPLARGKRWILQPCSLDDMDALKDSFSQLINLLEEKDHEAIRM</sequence>
<protein>
    <recommendedName>
        <fullName>ADP-ribosylation factor-like protein 15</fullName>
    </recommendedName>
</protein>
<feature type="chain" id="PRO_0000282389" description="ADP-ribosylation factor-like protein 15">
    <location>
        <begin position="1"/>
        <end position="204"/>
    </location>
</feature>
<feature type="binding site" evidence="1">
    <location>
        <begin position="39"/>
        <end position="46"/>
    </location>
    <ligand>
        <name>GTP</name>
        <dbReference type="ChEBI" id="CHEBI:37565"/>
    </ligand>
</feature>
<feature type="binding site" evidence="1">
    <location>
        <begin position="82"/>
        <end position="86"/>
    </location>
    <ligand>
        <name>GTP</name>
        <dbReference type="ChEBI" id="CHEBI:37565"/>
    </ligand>
</feature>
<feature type="binding site" evidence="1">
    <location>
        <begin position="142"/>
        <end position="145"/>
    </location>
    <ligand>
        <name>GTP</name>
        <dbReference type="ChEBI" id="CHEBI:37565"/>
    </ligand>
</feature>